<proteinExistence type="evidence at protein level"/>
<dbReference type="EC" id="2.7.11.1"/>
<dbReference type="EMBL" id="AF295668">
    <property type="protein sequence ID" value="AAK16688.1"/>
    <property type="molecule type" value="mRNA"/>
</dbReference>
<dbReference type="EMBL" id="AC004481">
    <property type="protein sequence ID" value="AAC27394.1"/>
    <property type="molecule type" value="Genomic_DNA"/>
</dbReference>
<dbReference type="EMBL" id="CP002685">
    <property type="protein sequence ID" value="AEC08929.1"/>
    <property type="molecule type" value="Genomic_DNA"/>
</dbReference>
<dbReference type="PIR" id="T02306">
    <property type="entry name" value="T02306"/>
</dbReference>
<dbReference type="RefSeq" id="NP_180965.1">
    <property type="nucleotide sequence ID" value="NM_128969.2"/>
</dbReference>
<dbReference type="SMR" id="O22971"/>
<dbReference type="BioGRID" id="3326">
    <property type="interactions" value="6"/>
</dbReference>
<dbReference type="FunCoup" id="O22971">
    <property type="interactions" value="1302"/>
</dbReference>
<dbReference type="IntAct" id="O22971">
    <property type="interactions" value="4"/>
</dbReference>
<dbReference type="STRING" id="3702.O22971"/>
<dbReference type="GlyGen" id="O22971">
    <property type="glycosylation" value="1 site"/>
</dbReference>
<dbReference type="PaxDb" id="3702-AT2G34180.1"/>
<dbReference type="EnsemblPlants" id="AT2G34180.1">
    <property type="protein sequence ID" value="AT2G34180.1"/>
    <property type="gene ID" value="AT2G34180"/>
</dbReference>
<dbReference type="GeneID" id="817979"/>
<dbReference type="Gramene" id="AT2G34180.1">
    <property type="protein sequence ID" value="AT2G34180.1"/>
    <property type="gene ID" value="AT2G34180"/>
</dbReference>
<dbReference type="KEGG" id="ath:AT2G34180"/>
<dbReference type="Araport" id="AT2G34180"/>
<dbReference type="TAIR" id="AT2G34180">
    <property type="gene designation" value="CIPK13"/>
</dbReference>
<dbReference type="eggNOG" id="KOG0583">
    <property type="taxonomic scope" value="Eukaryota"/>
</dbReference>
<dbReference type="HOGENOM" id="CLU_000288_59_0_1"/>
<dbReference type="InParanoid" id="O22971"/>
<dbReference type="OMA" id="QKPLQFM"/>
<dbReference type="OrthoDB" id="193931at2759"/>
<dbReference type="PhylomeDB" id="O22971"/>
<dbReference type="PRO" id="PR:O22971"/>
<dbReference type="Proteomes" id="UP000006548">
    <property type="component" value="Chromosome 2"/>
</dbReference>
<dbReference type="ExpressionAtlas" id="O22971">
    <property type="expression patterns" value="baseline and differential"/>
</dbReference>
<dbReference type="GO" id="GO:0005524">
    <property type="term" value="F:ATP binding"/>
    <property type="evidence" value="ECO:0007669"/>
    <property type="project" value="UniProtKB-KW"/>
</dbReference>
<dbReference type="GO" id="GO:0106310">
    <property type="term" value="F:protein serine kinase activity"/>
    <property type="evidence" value="ECO:0007669"/>
    <property type="project" value="RHEA"/>
</dbReference>
<dbReference type="GO" id="GO:0004674">
    <property type="term" value="F:protein serine/threonine kinase activity"/>
    <property type="evidence" value="ECO:0007669"/>
    <property type="project" value="UniProtKB-KW"/>
</dbReference>
<dbReference type="GO" id="GO:0007165">
    <property type="term" value="P:signal transduction"/>
    <property type="evidence" value="ECO:0007669"/>
    <property type="project" value="InterPro"/>
</dbReference>
<dbReference type="CDD" id="cd12195">
    <property type="entry name" value="CIPK_C"/>
    <property type="match status" value="1"/>
</dbReference>
<dbReference type="FunFam" id="1.10.510.10:FF:000653">
    <property type="entry name" value="Non-specific serine/threonine protein kinase"/>
    <property type="match status" value="1"/>
</dbReference>
<dbReference type="FunFam" id="3.30.200.20:FF:000096">
    <property type="entry name" value="Non-specific serine/threonine protein kinase"/>
    <property type="match status" value="1"/>
</dbReference>
<dbReference type="FunFam" id="3.30.310.80:FF:000005">
    <property type="entry name" value="Non-specific serine/threonine protein kinase"/>
    <property type="match status" value="1"/>
</dbReference>
<dbReference type="Gene3D" id="3.30.310.80">
    <property type="entry name" value="Kinase associated domain 1, KA1"/>
    <property type="match status" value="1"/>
</dbReference>
<dbReference type="Gene3D" id="1.10.510.10">
    <property type="entry name" value="Transferase(Phosphotransferase) domain 1"/>
    <property type="match status" value="1"/>
</dbReference>
<dbReference type="InterPro" id="IPR011009">
    <property type="entry name" value="Kinase-like_dom_sf"/>
</dbReference>
<dbReference type="InterPro" id="IPR018451">
    <property type="entry name" value="NAF/FISL_domain"/>
</dbReference>
<dbReference type="InterPro" id="IPR004041">
    <property type="entry name" value="NAF_dom"/>
</dbReference>
<dbReference type="InterPro" id="IPR000719">
    <property type="entry name" value="Prot_kinase_dom"/>
</dbReference>
<dbReference type="InterPro" id="IPR017441">
    <property type="entry name" value="Protein_kinase_ATP_BS"/>
</dbReference>
<dbReference type="InterPro" id="IPR008271">
    <property type="entry name" value="Ser/Thr_kinase_AS"/>
</dbReference>
<dbReference type="PANTHER" id="PTHR43895">
    <property type="entry name" value="CALCIUM/CALMODULIN-DEPENDENT PROTEIN KINASE KINASE-RELATED"/>
    <property type="match status" value="1"/>
</dbReference>
<dbReference type="PANTHER" id="PTHR43895:SF72">
    <property type="entry name" value="CBL-INTERACTING SERINE_THREONINE-PROTEIN KINASE 13"/>
    <property type="match status" value="1"/>
</dbReference>
<dbReference type="Pfam" id="PF03822">
    <property type="entry name" value="NAF"/>
    <property type="match status" value="1"/>
</dbReference>
<dbReference type="Pfam" id="PF00069">
    <property type="entry name" value="Pkinase"/>
    <property type="match status" value="1"/>
</dbReference>
<dbReference type="SMART" id="SM00220">
    <property type="entry name" value="S_TKc"/>
    <property type="match status" value="1"/>
</dbReference>
<dbReference type="SUPFAM" id="SSF56112">
    <property type="entry name" value="Protein kinase-like (PK-like)"/>
    <property type="match status" value="1"/>
</dbReference>
<dbReference type="PROSITE" id="PS50816">
    <property type="entry name" value="NAF"/>
    <property type="match status" value="1"/>
</dbReference>
<dbReference type="PROSITE" id="PS00107">
    <property type="entry name" value="PROTEIN_KINASE_ATP"/>
    <property type="match status" value="1"/>
</dbReference>
<dbReference type="PROSITE" id="PS50011">
    <property type="entry name" value="PROTEIN_KINASE_DOM"/>
    <property type="match status" value="1"/>
</dbReference>
<dbReference type="PROSITE" id="PS00108">
    <property type="entry name" value="PROTEIN_KINASE_ST"/>
    <property type="match status" value="1"/>
</dbReference>
<comment type="function">
    <text evidence="1">CIPK serine-threonine protein kinases interact with CBL proteins. Binding of a CBL protein to the regulatory NAF domain of CIPK protein lead to the activation of the kinase in a calcium-dependent manner (By similarity).</text>
</comment>
<comment type="catalytic activity">
    <reaction>
        <text>L-seryl-[protein] + ATP = O-phospho-L-seryl-[protein] + ADP + H(+)</text>
        <dbReference type="Rhea" id="RHEA:17989"/>
        <dbReference type="Rhea" id="RHEA-COMP:9863"/>
        <dbReference type="Rhea" id="RHEA-COMP:11604"/>
        <dbReference type="ChEBI" id="CHEBI:15378"/>
        <dbReference type="ChEBI" id="CHEBI:29999"/>
        <dbReference type="ChEBI" id="CHEBI:30616"/>
        <dbReference type="ChEBI" id="CHEBI:83421"/>
        <dbReference type="ChEBI" id="CHEBI:456216"/>
        <dbReference type="EC" id="2.7.11.1"/>
    </reaction>
</comment>
<comment type="catalytic activity">
    <reaction>
        <text>L-threonyl-[protein] + ATP = O-phospho-L-threonyl-[protein] + ADP + H(+)</text>
        <dbReference type="Rhea" id="RHEA:46608"/>
        <dbReference type="Rhea" id="RHEA-COMP:11060"/>
        <dbReference type="Rhea" id="RHEA-COMP:11605"/>
        <dbReference type="ChEBI" id="CHEBI:15378"/>
        <dbReference type="ChEBI" id="CHEBI:30013"/>
        <dbReference type="ChEBI" id="CHEBI:30616"/>
        <dbReference type="ChEBI" id="CHEBI:61977"/>
        <dbReference type="ChEBI" id="CHEBI:456216"/>
        <dbReference type="EC" id="2.7.11.1"/>
    </reaction>
</comment>
<comment type="cofactor">
    <cofactor evidence="1">
        <name>Mn(2+)</name>
        <dbReference type="ChEBI" id="CHEBI:29035"/>
    </cofactor>
</comment>
<comment type="subunit">
    <text evidence="8">Interacts with CBL2 and CBL3.</text>
</comment>
<comment type="interaction">
    <interactant intactId="EBI-637402">
        <id>O22971</id>
    </interactant>
    <interactant intactId="EBI-485991">
        <id>Q8LAS7</id>
        <label>CBL2</label>
    </interactant>
    <organismsDiffer>false</organismsDiffer>
    <experiments>4</experiments>
</comment>
<comment type="domain">
    <text evidence="1">The activation loop within the kinase domain is the target of phosphorylation/activation by upstream protein kinases. The PPI motif mediates the interaction with the ABI (abscisic acid-insensitive) phosphatases (By similarity).</text>
</comment>
<comment type="similarity">
    <text evidence="9">Belongs to the protein kinase superfamily. CAMK Ser/Thr protein kinase family. SNF1 subfamily.</text>
</comment>
<name>CIPKD_ARATH</name>
<evidence type="ECO:0000250" key="1"/>
<evidence type="ECO:0000250" key="2">
    <source>
        <dbReference type="UniProtKB" id="Q38997"/>
    </source>
</evidence>
<evidence type="ECO:0000250" key="3">
    <source>
        <dbReference type="UniProtKB" id="Q93V58"/>
    </source>
</evidence>
<evidence type="ECO:0000255" key="4">
    <source>
        <dbReference type="PROSITE-ProRule" id="PRU00159"/>
    </source>
</evidence>
<evidence type="ECO:0000255" key="5">
    <source>
        <dbReference type="PROSITE-ProRule" id="PRU00256"/>
    </source>
</evidence>
<evidence type="ECO:0000255" key="6">
    <source>
        <dbReference type="PROSITE-ProRule" id="PRU10027"/>
    </source>
</evidence>
<evidence type="ECO:0000256" key="7">
    <source>
        <dbReference type="SAM" id="MobiDB-lite"/>
    </source>
</evidence>
<evidence type="ECO:0000269" key="8">
    <source>
    </source>
</evidence>
<evidence type="ECO:0000305" key="9"/>
<feature type="chain" id="PRO_0000337215" description="CBL-interacting serine/threonine-protein kinase 13">
    <location>
        <begin position="1"/>
        <end position="502"/>
    </location>
</feature>
<feature type="domain" description="Protein kinase" evidence="4">
    <location>
        <begin position="57"/>
        <end position="311"/>
    </location>
</feature>
<feature type="domain" description="NAF" evidence="5">
    <location>
        <begin position="366"/>
        <end position="387"/>
    </location>
</feature>
<feature type="region of interest" description="Disordered" evidence="7">
    <location>
        <begin position="32"/>
        <end position="51"/>
    </location>
</feature>
<feature type="region of interest" description="Activation loop" evidence="1">
    <location>
        <begin position="197"/>
        <end position="226"/>
    </location>
</feature>
<feature type="region of interest" description="Disordered" evidence="7">
    <location>
        <begin position="331"/>
        <end position="359"/>
    </location>
</feature>
<feature type="region of interest" description="PPI" evidence="1">
    <location>
        <begin position="390"/>
        <end position="419"/>
    </location>
</feature>
<feature type="compositionally biased region" description="Low complexity" evidence="7">
    <location>
        <begin position="35"/>
        <end position="48"/>
    </location>
</feature>
<feature type="compositionally biased region" description="Low complexity" evidence="7">
    <location>
        <begin position="340"/>
        <end position="352"/>
    </location>
</feature>
<feature type="active site" description="Proton acceptor" evidence="4 6">
    <location>
        <position position="179"/>
    </location>
</feature>
<feature type="binding site" evidence="4">
    <location>
        <begin position="63"/>
        <end position="71"/>
    </location>
    <ligand>
        <name>ATP</name>
        <dbReference type="ChEBI" id="CHEBI:30616"/>
    </ligand>
</feature>
<feature type="binding site" evidence="4">
    <location>
        <position position="86"/>
    </location>
    <ligand>
        <name>ATP</name>
        <dbReference type="ChEBI" id="CHEBI:30616"/>
    </ligand>
</feature>
<feature type="modified residue" description="Phosphoserine" evidence="3">
    <location>
        <position position="201"/>
    </location>
</feature>
<feature type="modified residue" description="Phosphothreonine" evidence="2">
    <location>
        <position position="215"/>
    </location>
</feature>
<organism>
    <name type="scientific">Arabidopsis thaliana</name>
    <name type="common">Mouse-ear cress</name>
    <dbReference type="NCBI Taxonomy" id="3702"/>
    <lineage>
        <taxon>Eukaryota</taxon>
        <taxon>Viridiplantae</taxon>
        <taxon>Streptophyta</taxon>
        <taxon>Embryophyta</taxon>
        <taxon>Tracheophyta</taxon>
        <taxon>Spermatophyta</taxon>
        <taxon>Magnoliopsida</taxon>
        <taxon>eudicotyledons</taxon>
        <taxon>Gunneridae</taxon>
        <taxon>Pentapetalae</taxon>
        <taxon>rosids</taxon>
        <taxon>malvids</taxon>
        <taxon>Brassicales</taxon>
        <taxon>Brassicaceae</taxon>
        <taxon>Camelineae</taxon>
        <taxon>Arabidopsis</taxon>
    </lineage>
</organism>
<reference key="1">
    <citation type="journal article" date="2001" name="EMBO J.">
        <title>The NAF domain defines a novel protein-protein interaction module conserved in Ca(2+)-regulated kinases.</title>
        <authorList>
            <person name="Albrecht V."/>
            <person name="Ritz O."/>
            <person name="Linder S."/>
            <person name="Harter K."/>
            <person name="Kudla J."/>
        </authorList>
    </citation>
    <scope>NUCLEOTIDE SEQUENCE [MRNA]</scope>
    <scope>INTERACTION WITH CBL2 AND CBL3</scope>
</reference>
<reference key="2">
    <citation type="journal article" date="1999" name="Nature">
        <title>Sequence and analysis of chromosome 2 of the plant Arabidopsis thaliana.</title>
        <authorList>
            <person name="Lin X."/>
            <person name="Kaul S."/>
            <person name="Rounsley S.D."/>
            <person name="Shea T.P."/>
            <person name="Benito M.-I."/>
            <person name="Town C.D."/>
            <person name="Fujii C.Y."/>
            <person name="Mason T.M."/>
            <person name="Bowman C.L."/>
            <person name="Barnstead M.E."/>
            <person name="Feldblyum T.V."/>
            <person name="Buell C.R."/>
            <person name="Ketchum K.A."/>
            <person name="Lee J.J."/>
            <person name="Ronning C.M."/>
            <person name="Koo H.L."/>
            <person name="Moffat K.S."/>
            <person name="Cronin L.A."/>
            <person name="Shen M."/>
            <person name="Pai G."/>
            <person name="Van Aken S."/>
            <person name="Umayam L."/>
            <person name="Tallon L.J."/>
            <person name="Gill J.E."/>
            <person name="Adams M.D."/>
            <person name="Carrera A.J."/>
            <person name="Creasy T.H."/>
            <person name="Goodman H.M."/>
            <person name="Somerville C.R."/>
            <person name="Copenhaver G.P."/>
            <person name="Preuss D."/>
            <person name="Nierman W.C."/>
            <person name="White O."/>
            <person name="Eisen J.A."/>
            <person name="Salzberg S.L."/>
            <person name="Fraser C.M."/>
            <person name="Venter J.C."/>
        </authorList>
    </citation>
    <scope>NUCLEOTIDE SEQUENCE [LARGE SCALE GENOMIC DNA]</scope>
    <source>
        <strain>cv. Columbia</strain>
    </source>
</reference>
<reference key="3">
    <citation type="journal article" date="2017" name="Plant J.">
        <title>Araport11: a complete reannotation of the Arabidopsis thaliana reference genome.</title>
        <authorList>
            <person name="Cheng C.Y."/>
            <person name="Krishnakumar V."/>
            <person name="Chan A.P."/>
            <person name="Thibaud-Nissen F."/>
            <person name="Schobel S."/>
            <person name="Town C.D."/>
        </authorList>
    </citation>
    <scope>GENOME REANNOTATION</scope>
    <source>
        <strain>cv. Columbia</strain>
    </source>
</reference>
<reference key="4">
    <citation type="journal article" date="2003" name="Plant Physiol.">
        <title>The Arabidopsis CDPK-SnRK superfamily of protein kinases.</title>
        <authorList>
            <person name="Hrabak E.M."/>
            <person name="Chan C.W.M."/>
            <person name="Gribskov M."/>
            <person name="Harper J.F."/>
            <person name="Choi J.H."/>
            <person name="Halford N."/>
            <person name="Kudla J."/>
            <person name="Luan S."/>
            <person name="Nimmo H.G."/>
            <person name="Sussman M.R."/>
            <person name="Thomas M."/>
            <person name="Walker-Simmons K."/>
            <person name="Zhu J.-K."/>
            <person name="Harmon A.C."/>
        </authorList>
    </citation>
    <scope>GENE FAMILY</scope>
    <scope>NOMENCLATURE</scope>
</reference>
<accession>O22971</accession>
<protein>
    <recommendedName>
        <fullName>CBL-interacting serine/threonine-protein kinase 13</fullName>
        <ecNumber>2.7.11.1</ecNumber>
    </recommendedName>
    <alternativeName>
        <fullName>SNF1-related kinase 3.7</fullName>
    </alternativeName>
    <alternativeName>
        <fullName>SOS2-like protein kinase PKS10</fullName>
    </alternativeName>
</protein>
<keyword id="KW-0067">ATP-binding</keyword>
<keyword id="KW-0418">Kinase</keyword>
<keyword id="KW-0464">Manganese</keyword>
<keyword id="KW-0547">Nucleotide-binding</keyword>
<keyword id="KW-0597">Phosphoprotein</keyword>
<keyword id="KW-1185">Reference proteome</keyword>
<keyword id="KW-0723">Serine/threonine-protein kinase</keyword>
<keyword id="KW-0808">Transferase</keyword>
<gene>
    <name type="primary">CIPK13</name>
    <name type="synonym">PKS10</name>
    <name type="synonym">SnRK3.7</name>
    <name type="ordered locus">At2g34180</name>
    <name type="ORF">F13P17.2</name>
</gene>
<sequence>MAQVLSTPLAIPGPTPIQFMAGLLARIVTKNTNKETSTPESPRSPRTPQGSILMDKYEIGKLLGHGSFAKVYLARNIHSGEDVAIKVIDKEKIVKSGLAGHIKREISILRRVRHPYIVHLLEVMATKTKIYIVMEYVRGGELYNTVARGRLREGTARRYFQQLISSVAFCHSRGVYHRDLKLENLLLDDKGNVKVSDFGLSVVSEQLKQEGICQTFCGTPAYLAPEVLTRKGYEGAKADIWSCGVILFVLMAGYLPFDDKNILVMYTKIYKGQFKCPKWFSPELARLVTRMLDTNPDTRITIPEIMKHRWFKKGFKHVKFYIENDKLCREDDDNDDDDSSSLSSGRSSTASEGDAEFDIKRVDSMPRPASLNAFDILSFSDLSGLFEEGGQGARFVSAAPMTKIISKLEEIAKEVKFMVRKKDWSVRLEGCREGAKGPLTIRVEIFELTPSLVVVEVKKKGGNIEEYEEFCNKELRPQLEKLMHYQADEVEEVMCLPPEIEQ</sequence>